<feature type="signal peptide" evidence="1">
    <location>
        <begin position="1"/>
        <end position="17"/>
    </location>
</feature>
<feature type="chain" id="PRO_0000018025" description="Outer membrane lipoprotein MapA">
    <location>
        <begin position="18"/>
        <end position="214"/>
    </location>
</feature>
<feature type="lipid moiety-binding region" description="N-palmitoyl cysteine" evidence="1">
    <location>
        <position position="18"/>
    </location>
</feature>
<feature type="lipid moiety-binding region" description="S-diacylglycerol cysteine" evidence="1">
    <location>
        <position position="18"/>
    </location>
</feature>
<evidence type="ECO:0000305" key="1"/>
<keyword id="KW-0998">Cell outer membrane</keyword>
<keyword id="KW-0449">Lipoprotein</keyword>
<keyword id="KW-0472">Membrane</keyword>
<keyword id="KW-0564">Palmitate</keyword>
<keyword id="KW-1185">Reference proteome</keyword>
<keyword id="KW-0732">Signal</keyword>
<sequence>MFKKFLIFIVPILFLSACATKQDTFAQVNQISKNSQCSSCESPGGFEAKIKGLLYISDVGIQCCANKRTLDTGIALKKVYLHRFYDLKEGQKVLNAKGKKLFVDVNFNAVFYTYLKQELEARGIVVLDNNDQNSPYVSKIDLEFISYGATQDAIGLHSKLVGVLQVSDINKNKKFTIRTKQDVQGFDDLKETTFYTHLLIKQMANKAASLISEL</sequence>
<accession>P0C633</accession>
<accession>Q0P9M3</accession>
<accession>Q46122</accession>
<proteinExistence type="predicted"/>
<gene>
    <name type="primary">mapA</name>
    <name type="ordered locus">Cj1029c</name>
</gene>
<reference key="1">
    <citation type="journal article" date="2000" name="Nature">
        <title>The genome sequence of the food-borne pathogen Campylobacter jejuni reveals hypervariable sequences.</title>
        <authorList>
            <person name="Parkhill J."/>
            <person name="Wren B.W."/>
            <person name="Mungall K.L."/>
            <person name="Ketley J.M."/>
            <person name="Churcher C.M."/>
            <person name="Basham D."/>
            <person name="Chillingworth T."/>
            <person name="Davies R.M."/>
            <person name="Feltwell T."/>
            <person name="Holroyd S."/>
            <person name="Jagels K."/>
            <person name="Karlyshev A.V."/>
            <person name="Moule S."/>
            <person name="Pallen M.J."/>
            <person name="Penn C.W."/>
            <person name="Quail M.A."/>
            <person name="Rajandream M.A."/>
            <person name="Rutherford K.M."/>
            <person name="van Vliet A.H.M."/>
            <person name="Whitehead S."/>
            <person name="Barrell B.G."/>
        </authorList>
    </citation>
    <scope>NUCLEOTIDE SEQUENCE [LARGE SCALE GENOMIC DNA]</scope>
    <source>
        <strain>ATCC 700819 / NCTC 11168</strain>
    </source>
</reference>
<comment type="subcellular location">
    <subcellularLocation>
        <location evidence="1">Cell outer membrane</location>
        <topology evidence="1">Lipid-anchor</topology>
    </subcellularLocation>
</comment>
<protein>
    <recommendedName>
        <fullName>Outer membrane lipoprotein MapA</fullName>
    </recommendedName>
</protein>
<organism>
    <name type="scientific">Campylobacter jejuni subsp. jejuni serotype O:2 (strain ATCC 700819 / NCTC 11168)</name>
    <dbReference type="NCBI Taxonomy" id="192222"/>
    <lineage>
        <taxon>Bacteria</taxon>
        <taxon>Pseudomonadati</taxon>
        <taxon>Campylobacterota</taxon>
        <taxon>Epsilonproteobacteria</taxon>
        <taxon>Campylobacterales</taxon>
        <taxon>Campylobacteraceae</taxon>
        <taxon>Campylobacter</taxon>
    </lineage>
</organism>
<dbReference type="EMBL" id="AL111168">
    <property type="protein sequence ID" value="CAL35147.1"/>
    <property type="molecule type" value="Genomic_DNA"/>
</dbReference>
<dbReference type="PIR" id="I40768">
    <property type="entry name" value="I40768"/>
</dbReference>
<dbReference type="RefSeq" id="WP_002852941.1">
    <property type="nucleotide sequence ID" value="NZ_SZUC01000001.1"/>
</dbReference>
<dbReference type="RefSeq" id="YP_002344424.1">
    <property type="nucleotide sequence ID" value="NC_002163.1"/>
</dbReference>
<dbReference type="STRING" id="192222.Cj1029c"/>
<dbReference type="PaxDb" id="192222-Cj1029c"/>
<dbReference type="EnsemblBacteria" id="CAL35147">
    <property type="protein sequence ID" value="CAL35147"/>
    <property type="gene ID" value="Cj1029c"/>
</dbReference>
<dbReference type="GeneID" id="905321"/>
<dbReference type="KEGG" id="cje:Cj1029c"/>
<dbReference type="PATRIC" id="fig|192222.6.peg.1011"/>
<dbReference type="eggNOG" id="ENOG5030YGZ">
    <property type="taxonomic scope" value="Bacteria"/>
</dbReference>
<dbReference type="HOGENOM" id="CLU_1286828_0_0_7"/>
<dbReference type="OrthoDB" id="5359329at2"/>
<dbReference type="Proteomes" id="UP000000799">
    <property type="component" value="Chromosome"/>
</dbReference>
<dbReference type="GO" id="GO:0009279">
    <property type="term" value="C:cell outer membrane"/>
    <property type="evidence" value="ECO:0007669"/>
    <property type="project" value="UniProtKB-SubCell"/>
</dbReference>
<dbReference type="InterPro" id="IPR053486">
    <property type="entry name" value="MapA_lipoprotein"/>
</dbReference>
<dbReference type="NCBIfam" id="NF041252">
    <property type="entry name" value="outer_memb_MapA"/>
    <property type="match status" value="1"/>
</dbReference>
<dbReference type="PROSITE" id="PS51257">
    <property type="entry name" value="PROKAR_LIPOPROTEIN"/>
    <property type="match status" value="1"/>
</dbReference>
<name>MAPA_CAMJE</name>